<name>NUOI_CYTH3</name>
<sequence length="175" mass="20234">MQLTNRSKVVVDKKMTFMERIYIPSIVSGMMITLSHLFKKKATIQYPEVQREFAFVYRGKHILKRDEQGRENCTACGLCAVSCPAEAITIIADERKKGEEHLYKEEKYASLYEINMLRCIFCGLCEEACPKDAVYLTEELVPAQYNRKDFIYGKDKLVQPLGTSAHPKTYKPYKK</sequence>
<dbReference type="EC" id="7.1.1.-" evidence="1"/>
<dbReference type="EMBL" id="CP000383">
    <property type="protein sequence ID" value="ABG58646.1"/>
    <property type="molecule type" value="Genomic_DNA"/>
</dbReference>
<dbReference type="RefSeq" id="WP_011584761.1">
    <property type="nucleotide sequence ID" value="NC_008255.1"/>
</dbReference>
<dbReference type="SMR" id="Q11VC0"/>
<dbReference type="STRING" id="269798.CHU_1374"/>
<dbReference type="KEGG" id="chu:CHU_1374"/>
<dbReference type="eggNOG" id="COG1143">
    <property type="taxonomic scope" value="Bacteria"/>
</dbReference>
<dbReference type="HOGENOM" id="CLU_067218_4_3_10"/>
<dbReference type="OrthoDB" id="9808559at2"/>
<dbReference type="Proteomes" id="UP000001822">
    <property type="component" value="Chromosome"/>
</dbReference>
<dbReference type="GO" id="GO:0005886">
    <property type="term" value="C:plasma membrane"/>
    <property type="evidence" value="ECO:0007669"/>
    <property type="project" value="UniProtKB-SubCell"/>
</dbReference>
<dbReference type="GO" id="GO:0051539">
    <property type="term" value="F:4 iron, 4 sulfur cluster binding"/>
    <property type="evidence" value="ECO:0007669"/>
    <property type="project" value="UniProtKB-KW"/>
</dbReference>
<dbReference type="GO" id="GO:0005506">
    <property type="term" value="F:iron ion binding"/>
    <property type="evidence" value="ECO:0007669"/>
    <property type="project" value="UniProtKB-UniRule"/>
</dbReference>
<dbReference type="GO" id="GO:0050136">
    <property type="term" value="F:NADH:ubiquinone reductase (non-electrogenic) activity"/>
    <property type="evidence" value="ECO:0007669"/>
    <property type="project" value="UniProtKB-UniRule"/>
</dbReference>
<dbReference type="GO" id="GO:0048038">
    <property type="term" value="F:quinone binding"/>
    <property type="evidence" value="ECO:0007669"/>
    <property type="project" value="UniProtKB-KW"/>
</dbReference>
<dbReference type="GO" id="GO:0009060">
    <property type="term" value="P:aerobic respiration"/>
    <property type="evidence" value="ECO:0007669"/>
    <property type="project" value="TreeGrafter"/>
</dbReference>
<dbReference type="Gene3D" id="3.30.70.3270">
    <property type="match status" value="1"/>
</dbReference>
<dbReference type="HAMAP" id="MF_01351">
    <property type="entry name" value="NDH1_NuoI"/>
    <property type="match status" value="1"/>
</dbReference>
<dbReference type="InterPro" id="IPR017896">
    <property type="entry name" value="4Fe4S_Fe-S-bd"/>
</dbReference>
<dbReference type="InterPro" id="IPR017900">
    <property type="entry name" value="4Fe4S_Fe_S_CS"/>
</dbReference>
<dbReference type="InterPro" id="IPR010226">
    <property type="entry name" value="NADH_quinone_OxRdtase_chainI"/>
</dbReference>
<dbReference type="NCBIfam" id="TIGR01971">
    <property type="entry name" value="NuoI"/>
    <property type="match status" value="1"/>
</dbReference>
<dbReference type="PANTHER" id="PTHR10849:SF20">
    <property type="entry name" value="NADH DEHYDROGENASE [UBIQUINONE] IRON-SULFUR PROTEIN 8, MITOCHONDRIAL"/>
    <property type="match status" value="1"/>
</dbReference>
<dbReference type="PANTHER" id="PTHR10849">
    <property type="entry name" value="NADH DEHYDROGENASE UBIQUINONE IRON-SULFUR PROTEIN 8, MITOCHONDRIAL"/>
    <property type="match status" value="1"/>
</dbReference>
<dbReference type="Pfam" id="PF12838">
    <property type="entry name" value="Fer4_7"/>
    <property type="match status" value="1"/>
</dbReference>
<dbReference type="SUPFAM" id="SSF54862">
    <property type="entry name" value="4Fe-4S ferredoxins"/>
    <property type="match status" value="1"/>
</dbReference>
<dbReference type="PROSITE" id="PS00198">
    <property type="entry name" value="4FE4S_FER_1"/>
    <property type="match status" value="2"/>
</dbReference>
<dbReference type="PROSITE" id="PS51379">
    <property type="entry name" value="4FE4S_FER_2"/>
    <property type="match status" value="2"/>
</dbReference>
<protein>
    <recommendedName>
        <fullName evidence="1">NADH-quinone oxidoreductase subunit I</fullName>
        <ecNumber evidence="1">7.1.1.-</ecNumber>
    </recommendedName>
    <alternativeName>
        <fullName evidence="1">NADH dehydrogenase I subunit I</fullName>
    </alternativeName>
    <alternativeName>
        <fullName evidence="1">NDH-1 subunit I</fullName>
    </alternativeName>
</protein>
<accession>Q11VC0</accession>
<keyword id="KW-0004">4Fe-4S</keyword>
<keyword id="KW-0997">Cell inner membrane</keyword>
<keyword id="KW-1003">Cell membrane</keyword>
<keyword id="KW-0408">Iron</keyword>
<keyword id="KW-0411">Iron-sulfur</keyword>
<keyword id="KW-0472">Membrane</keyword>
<keyword id="KW-0479">Metal-binding</keyword>
<keyword id="KW-0520">NAD</keyword>
<keyword id="KW-0874">Quinone</keyword>
<keyword id="KW-1185">Reference proteome</keyword>
<keyword id="KW-0677">Repeat</keyword>
<keyword id="KW-1278">Translocase</keyword>
<keyword id="KW-0830">Ubiquinone</keyword>
<gene>
    <name evidence="1" type="primary">nuoI</name>
    <name type="ordered locus">CHU_1374</name>
</gene>
<evidence type="ECO:0000255" key="1">
    <source>
        <dbReference type="HAMAP-Rule" id="MF_01351"/>
    </source>
</evidence>
<organism>
    <name type="scientific">Cytophaga hutchinsonii (strain ATCC 33406 / DSM 1761 / CIP 103989 / NBRC 15051 / NCIMB 9469 / D465)</name>
    <dbReference type="NCBI Taxonomy" id="269798"/>
    <lineage>
        <taxon>Bacteria</taxon>
        <taxon>Pseudomonadati</taxon>
        <taxon>Bacteroidota</taxon>
        <taxon>Cytophagia</taxon>
        <taxon>Cytophagales</taxon>
        <taxon>Cytophagaceae</taxon>
        <taxon>Cytophaga</taxon>
    </lineage>
</organism>
<reference key="1">
    <citation type="journal article" date="2007" name="Appl. Environ. Microbiol.">
        <title>Genome sequence of the cellulolytic gliding bacterium Cytophaga hutchinsonii.</title>
        <authorList>
            <person name="Xie G."/>
            <person name="Bruce D.C."/>
            <person name="Challacombe J.F."/>
            <person name="Chertkov O."/>
            <person name="Detter J.C."/>
            <person name="Gilna P."/>
            <person name="Han C.S."/>
            <person name="Lucas S."/>
            <person name="Misra M."/>
            <person name="Myers G.L."/>
            <person name="Richardson P."/>
            <person name="Tapia R."/>
            <person name="Thayer N."/>
            <person name="Thompson L.S."/>
            <person name="Brettin T.S."/>
            <person name="Henrissat B."/>
            <person name="Wilson D.B."/>
            <person name="McBride M.J."/>
        </authorList>
    </citation>
    <scope>NUCLEOTIDE SEQUENCE [LARGE SCALE GENOMIC DNA]</scope>
    <source>
        <strain>ATCC 33406 / DSM 1761 / JCM 20678 / CIP 103989 / IAM 12607 / NBRC 15051 / NCIMB 9469 / D465</strain>
    </source>
</reference>
<feature type="chain" id="PRO_0000298490" description="NADH-quinone oxidoreductase subunit I">
    <location>
        <begin position="1"/>
        <end position="175"/>
    </location>
</feature>
<feature type="domain" description="4Fe-4S ferredoxin-type 1" evidence="1">
    <location>
        <begin position="64"/>
        <end position="93"/>
    </location>
</feature>
<feature type="domain" description="4Fe-4S ferredoxin-type 2" evidence="1">
    <location>
        <begin position="110"/>
        <end position="139"/>
    </location>
</feature>
<feature type="binding site" evidence="1">
    <location>
        <position position="73"/>
    </location>
    <ligand>
        <name>[4Fe-4S] cluster</name>
        <dbReference type="ChEBI" id="CHEBI:49883"/>
        <label>1</label>
    </ligand>
</feature>
<feature type="binding site" evidence="1">
    <location>
        <position position="76"/>
    </location>
    <ligand>
        <name>[4Fe-4S] cluster</name>
        <dbReference type="ChEBI" id="CHEBI:49883"/>
        <label>1</label>
    </ligand>
</feature>
<feature type="binding site" evidence="1">
    <location>
        <position position="79"/>
    </location>
    <ligand>
        <name>[4Fe-4S] cluster</name>
        <dbReference type="ChEBI" id="CHEBI:49883"/>
        <label>1</label>
    </ligand>
</feature>
<feature type="binding site" evidence="1">
    <location>
        <position position="83"/>
    </location>
    <ligand>
        <name>[4Fe-4S] cluster</name>
        <dbReference type="ChEBI" id="CHEBI:49883"/>
        <label>2</label>
    </ligand>
</feature>
<feature type="binding site" evidence="1">
    <location>
        <position position="119"/>
    </location>
    <ligand>
        <name>[4Fe-4S] cluster</name>
        <dbReference type="ChEBI" id="CHEBI:49883"/>
        <label>2</label>
    </ligand>
</feature>
<feature type="binding site" evidence="1">
    <location>
        <position position="122"/>
    </location>
    <ligand>
        <name>[4Fe-4S] cluster</name>
        <dbReference type="ChEBI" id="CHEBI:49883"/>
        <label>2</label>
    </ligand>
</feature>
<feature type="binding site" evidence="1">
    <location>
        <position position="125"/>
    </location>
    <ligand>
        <name>[4Fe-4S] cluster</name>
        <dbReference type="ChEBI" id="CHEBI:49883"/>
        <label>2</label>
    </ligand>
</feature>
<feature type="binding site" evidence="1">
    <location>
        <position position="129"/>
    </location>
    <ligand>
        <name>[4Fe-4S] cluster</name>
        <dbReference type="ChEBI" id="CHEBI:49883"/>
        <label>1</label>
    </ligand>
</feature>
<comment type="function">
    <text evidence="1">NDH-1 shuttles electrons from NADH, via FMN and iron-sulfur (Fe-S) centers, to quinones in the respiratory chain. The immediate electron acceptor for the enzyme in this species is believed to be ubiquinone. Couples the redox reaction to proton translocation (for every two electrons transferred, four hydrogen ions are translocated across the cytoplasmic membrane), and thus conserves the redox energy in a proton gradient.</text>
</comment>
<comment type="catalytic activity">
    <reaction evidence="1">
        <text>a quinone + NADH + 5 H(+)(in) = a quinol + NAD(+) + 4 H(+)(out)</text>
        <dbReference type="Rhea" id="RHEA:57888"/>
        <dbReference type="ChEBI" id="CHEBI:15378"/>
        <dbReference type="ChEBI" id="CHEBI:24646"/>
        <dbReference type="ChEBI" id="CHEBI:57540"/>
        <dbReference type="ChEBI" id="CHEBI:57945"/>
        <dbReference type="ChEBI" id="CHEBI:132124"/>
    </reaction>
</comment>
<comment type="cofactor">
    <cofactor evidence="1">
        <name>[4Fe-4S] cluster</name>
        <dbReference type="ChEBI" id="CHEBI:49883"/>
    </cofactor>
    <text evidence="1">Binds 2 [4Fe-4S] clusters per subunit.</text>
</comment>
<comment type="subunit">
    <text evidence="1">NDH-1 is composed of 14 different subunits. Subunits NuoA, H, J, K, L, M, N constitute the membrane sector of the complex.</text>
</comment>
<comment type="subcellular location">
    <subcellularLocation>
        <location evidence="1">Cell inner membrane</location>
        <topology evidence="1">Peripheral membrane protein</topology>
    </subcellularLocation>
</comment>
<comment type="similarity">
    <text evidence="1">Belongs to the complex I 23 kDa subunit family.</text>
</comment>
<proteinExistence type="inferred from homology"/>